<sequence>MKTLLLTFLVVTIVCLDLGYTLICHQLHGLQTCEPAQKFCQKRTTMFFPNHPVLLMGCTYNCPTERYSVCCSTDKCNK</sequence>
<organism>
    <name type="scientific">Ophiophagus hannah</name>
    <name type="common">King cobra</name>
    <name type="synonym">Naja hannah</name>
    <dbReference type="NCBI Taxonomy" id="8665"/>
    <lineage>
        <taxon>Eukaryota</taxon>
        <taxon>Metazoa</taxon>
        <taxon>Chordata</taxon>
        <taxon>Craniata</taxon>
        <taxon>Vertebrata</taxon>
        <taxon>Euteleostomi</taxon>
        <taxon>Lepidosauria</taxon>
        <taxon>Squamata</taxon>
        <taxon>Bifurcata</taxon>
        <taxon>Unidentata</taxon>
        <taxon>Episquamata</taxon>
        <taxon>Toxicofera</taxon>
        <taxon>Serpentes</taxon>
        <taxon>Colubroidea</taxon>
        <taxon>Elapidae</taxon>
        <taxon>Elapinae</taxon>
        <taxon>Ophiophagus</taxon>
    </lineage>
</organism>
<proteinExistence type="inferred from homology"/>
<accession>Q2VBP0</accession>
<name>3SXE_OPHHA</name>
<dbReference type="EMBL" id="DQ273575">
    <property type="protein sequence ID" value="ABB83629.1"/>
    <property type="molecule type" value="mRNA"/>
</dbReference>
<dbReference type="SMR" id="Q2VBP0"/>
<dbReference type="GO" id="GO:0005576">
    <property type="term" value="C:extracellular region"/>
    <property type="evidence" value="ECO:0007669"/>
    <property type="project" value="UniProtKB-SubCell"/>
</dbReference>
<dbReference type="GO" id="GO:0030550">
    <property type="term" value="F:acetylcholine receptor inhibitor activity"/>
    <property type="evidence" value="ECO:0007669"/>
    <property type="project" value="UniProtKB-KW"/>
</dbReference>
<dbReference type="GO" id="GO:0099106">
    <property type="term" value="F:ion channel regulator activity"/>
    <property type="evidence" value="ECO:0007669"/>
    <property type="project" value="UniProtKB-KW"/>
</dbReference>
<dbReference type="GO" id="GO:0090729">
    <property type="term" value="F:toxin activity"/>
    <property type="evidence" value="ECO:0007669"/>
    <property type="project" value="UniProtKB-KW"/>
</dbReference>
<dbReference type="CDD" id="cd00206">
    <property type="entry name" value="TFP_snake_toxin"/>
    <property type="match status" value="1"/>
</dbReference>
<dbReference type="Gene3D" id="2.10.60.10">
    <property type="entry name" value="CD59"/>
    <property type="match status" value="1"/>
</dbReference>
<dbReference type="InterPro" id="IPR003571">
    <property type="entry name" value="Snake_3FTx"/>
</dbReference>
<dbReference type="InterPro" id="IPR045860">
    <property type="entry name" value="Snake_toxin-like_sf"/>
</dbReference>
<dbReference type="InterPro" id="IPR054131">
    <property type="entry name" value="Toxin_cobra-type"/>
</dbReference>
<dbReference type="Pfam" id="PF21947">
    <property type="entry name" value="Toxin_cobra-type"/>
    <property type="match status" value="1"/>
</dbReference>
<dbReference type="SUPFAM" id="SSF57302">
    <property type="entry name" value="Snake toxin-like"/>
    <property type="match status" value="1"/>
</dbReference>
<feature type="signal peptide" evidence="1">
    <location>
        <begin position="1"/>
        <end position="21"/>
    </location>
</feature>
<feature type="chain" id="PRO_5000006485" description="Short neurotoxin SNTX14">
    <location>
        <begin position="22"/>
        <end position="78"/>
    </location>
</feature>
<feature type="site" description="Important residue for inhibition of muscle alpha-1-beta-1-delta-epsilon (CHRNA1-CHRNB1-CHRND-CHRNE) and neuronal alpha-3-beta-2/CHRNA3-CHRNB2 nAChR" evidence="3">
    <location>
        <position position="28"/>
    </location>
</feature>
<feature type="site" description="Important residue for inhibition of muscle alpha-1-beta-1-delta-epsilon (CHRNA1-CHRNB1-CHRND-CHRNE) and neuronal alpha-3-beta-2/CHRNA3-CHRNB2 nAChR" evidence="3">
    <location>
        <position position="43"/>
    </location>
</feature>
<feature type="site" description="Key residue for inhibition of muscle alpha-1-beta-1-delta-epsilon (CHRNA1-CHRNB1-CHRND-CHRNE) nAChR" evidence="3">
    <location>
        <position position="44"/>
    </location>
</feature>
<feature type="site" description="Important residue for inhibition of muscle alpha-1-beta-1-delta-epsilon (CHRNA1-CHRNB1-CHRND-CHRNE) nAChR" evidence="3">
    <location>
        <position position="45"/>
    </location>
</feature>
<feature type="site" description="Key residue for inhibition of muscle alpha-1-beta-1-delta-epsilon (CHRNA1-CHRNB1-CHRND-CHRNE) and important for inhibition of neuronal alpha-3-beta-2/CHRNA3-CHRNB2 nAChR" evidence="3">
    <location>
        <position position="46"/>
    </location>
</feature>
<feature type="site" description="Important residue for inhibition of muscle alpha-1-beta-1-delta-epsilon (CHRNA1-CHRNB1-CHRND-CHRNE) nAChR" evidence="3">
    <location>
        <position position="47"/>
    </location>
</feature>
<feature type="site" description="Key residue for inhibition of muscle alpha-1-beta-1-delta-epsilon (CHRNA1-CHRNB1-CHRND-CHRNE) and important residue for inhibition of neuronal alpha-3-beta-2/CHRNA3-CHRNB2 nAChR" evidence="3">
    <location>
        <position position="48"/>
    </location>
</feature>
<feature type="site" description="Important residue for inhibition of muscle alpha-1-beta-1-delta-epsilon (CHRNA1-CHRNB1-CHRND-CHRNE) and neuronal alpha-3-beta-2/CHRNA3-CHRNB2 nAChR" evidence="3">
    <location>
        <position position="51"/>
    </location>
</feature>
<feature type="site" description="Important residue for inhibition of muscle alpha-1-beta-1-delta-epsilon (CHRNA1-CHRNB1-CHRND-CHRNE) and neuronal alpha-3-beta-2/CHRNA3-CHRNB2 nAChR" evidence="3">
    <location>
        <position position="66"/>
    </location>
</feature>
<feature type="site" description="Important residue for interaction with muscle alpha-1-beta-1-delta-epsilon (CHRNA1-CHRNB1-CHRND-CHRNE) and neuronal alpha-3-beta-2/CHRNA3-CHRNB2 nAChR" evidence="3">
    <location>
        <position position="67"/>
    </location>
</feature>
<feature type="disulfide bond" evidence="2">
    <location>
        <begin position="24"/>
        <end position="40"/>
    </location>
</feature>
<feature type="disulfide bond" evidence="2">
    <location>
        <begin position="33"/>
        <end position="58"/>
    </location>
</feature>
<feature type="disulfide bond" evidence="2">
    <location>
        <begin position="62"/>
        <end position="70"/>
    </location>
</feature>
<feature type="disulfide bond" evidence="2">
    <location>
        <begin position="71"/>
        <end position="76"/>
    </location>
</feature>
<protein>
    <recommendedName>
        <fullName evidence="5">Short neurotoxin SNTX14</fullName>
    </recommendedName>
    <alternativeName>
        <fullName>Three-finger toxin</fullName>
        <shortName>3FTx</shortName>
    </alternativeName>
</protein>
<reference key="1">
    <citation type="journal article" date="2006" name="Biochem. J.">
        <title>Novel genes encoding six kinds of three-finger toxins in Ophiophagus hannah (king cobra) and function characterization of two recombinant long-chain neurotoxins.</title>
        <authorList>
            <person name="Li J."/>
            <person name="Zhang H."/>
            <person name="Liu J."/>
            <person name="Xu K."/>
        </authorList>
    </citation>
    <scope>NUCLEOTIDE SEQUENCE [MRNA]</scope>
    <source>
        <tissue>Venom gland</tissue>
    </source>
</reference>
<keyword id="KW-0008">Acetylcholine receptor inhibiting toxin</keyword>
<keyword id="KW-1015">Disulfide bond</keyword>
<keyword id="KW-0872">Ion channel impairing toxin</keyword>
<keyword id="KW-0528">Neurotoxin</keyword>
<keyword id="KW-0629">Postsynaptic neurotoxin</keyword>
<keyword id="KW-0964">Secreted</keyword>
<keyword id="KW-0732">Signal</keyword>
<keyword id="KW-0800">Toxin</keyword>
<evidence type="ECO:0000250" key="1"/>
<evidence type="ECO:0000250" key="2">
    <source>
        <dbReference type="UniProtKB" id="P0DKR6"/>
    </source>
</evidence>
<evidence type="ECO:0000250" key="3">
    <source>
        <dbReference type="UniProtKB" id="P83302"/>
    </source>
</evidence>
<evidence type="ECO:0000305" key="4"/>
<evidence type="ECO:0000312" key="5">
    <source>
        <dbReference type="EMBL" id="ABB83629.1"/>
    </source>
</evidence>
<comment type="function">
    <text evidence="3">This three-finger toxin binds and inhibits the nicotinic acetylcholine receptor (nAChR).</text>
</comment>
<comment type="subcellular location">
    <subcellularLocation>
        <location evidence="1">Secreted</location>
    </subcellularLocation>
</comment>
<comment type="tissue specificity">
    <text evidence="4">Expressed by the venom gland.</text>
</comment>
<comment type="miscellaneous">
    <text evidence="4">Is classified as a P-type cytotoxin, since a proline residue stands at position 49 (Pro-31 in standard classification).</text>
</comment>
<comment type="similarity">
    <text evidence="4">Belongs to the three-finger toxin family. Short-chain subfamily.</text>
</comment>